<protein>
    <recommendedName>
        <fullName evidence="1">Imidazoleglycerol-phosphate dehydratase</fullName>
        <shortName evidence="1">IGPD</shortName>
        <ecNumber evidence="1">4.2.1.19</ecNumber>
    </recommendedName>
</protein>
<accession>B1XSV0</accession>
<reference key="1">
    <citation type="journal article" date="2013" name="Proc. Natl. Acad. Sci. U.S.A.">
        <title>Polynucleobacter necessarius, a model for genome reduction in both free-living and symbiotic bacteria.</title>
        <authorList>
            <person name="Boscaro V."/>
            <person name="Felletti M."/>
            <person name="Vannini C."/>
            <person name="Ackerman M.S."/>
            <person name="Chain P.S."/>
            <person name="Malfatti S."/>
            <person name="Vergez L.M."/>
            <person name="Shin M."/>
            <person name="Doak T.G."/>
            <person name="Lynch M."/>
            <person name="Petroni G."/>
        </authorList>
    </citation>
    <scope>NUCLEOTIDE SEQUENCE [LARGE SCALE GENOMIC DNA]</scope>
    <source>
        <strain>STIR1</strain>
    </source>
</reference>
<proteinExistence type="inferred from homology"/>
<gene>
    <name evidence="1" type="primary">hisB</name>
    <name type="ordered locus">Pnec_0108</name>
</gene>
<organism>
    <name type="scientific">Polynucleobacter necessarius subsp. necessarius (strain STIR1)</name>
    <dbReference type="NCBI Taxonomy" id="452638"/>
    <lineage>
        <taxon>Bacteria</taxon>
        <taxon>Pseudomonadati</taxon>
        <taxon>Pseudomonadota</taxon>
        <taxon>Betaproteobacteria</taxon>
        <taxon>Burkholderiales</taxon>
        <taxon>Burkholderiaceae</taxon>
        <taxon>Polynucleobacter</taxon>
    </lineage>
</organism>
<sequence length="195" mass="21213">MRQADVTRNTSETKIQISINLDGTGKAELASGVPFLDHMLDQIARHGMIDLKVVANGDAHIDDHHTVEDVGITLGQAFAKAVGDKVGITRYGHSYVPLDETLSRIVIDFSGRPGLEFNVPFTRARVGDFDVDLSIEFFRGFVNHAGVTLHIDNLRGINAHHQIETVFKAFGRALRMALAVDPRASGSIPSTKGSL</sequence>
<feature type="chain" id="PRO_1000092707" description="Imidazoleglycerol-phosphate dehydratase">
    <location>
        <begin position="1"/>
        <end position="195"/>
    </location>
</feature>
<dbReference type="EC" id="4.2.1.19" evidence="1"/>
<dbReference type="EMBL" id="CP001010">
    <property type="protein sequence ID" value="ACB43427.1"/>
    <property type="molecule type" value="Genomic_DNA"/>
</dbReference>
<dbReference type="SMR" id="B1XSV0"/>
<dbReference type="STRING" id="452638.Pnec_0108"/>
<dbReference type="KEGG" id="pne:Pnec_0108"/>
<dbReference type="eggNOG" id="COG0131">
    <property type="taxonomic scope" value="Bacteria"/>
</dbReference>
<dbReference type="HOGENOM" id="CLU_044308_2_0_4"/>
<dbReference type="OrthoDB" id="9790411at2"/>
<dbReference type="UniPathway" id="UPA00031">
    <property type="reaction ID" value="UER00011"/>
</dbReference>
<dbReference type="GO" id="GO:0005737">
    <property type="term" value="C:cytoplasm"/>
    <property type="evidence" value="ECO:0007669"/>
    <property type="project" value="UniProtKB-SubCell"/>
</dbReference>
<dbReference type="GO" id="GO:0004424">
    <property type="term" value="F:imidazoleglycerol-phosphate dehydratase activity"/>
    <property type="evidence" value="ECO:0007669"/>
    <property type="project" value="UniProtKB-UniRule"/>
</dbReference>
<dbReference type="GO" id="GO:0000105">
    <property type="term" value="P:L-histidine biosynthetic process"/>
    <property type="evidence" value="ECO:0007669"/>
    <property type="project" value="UniProtKB-UniRule"/>
</dbReference>
<dbReference type="CDD" id="cd07914">
    <property type="entry name" value="IGPD"/>
    <property type="match status" value="1"/>
</dbReference>
<dbReference type="FunFam" id="3.30.230.40:FF:000001">
    <property type="entry name" value="Imidazoleglycerol-phosphate dehydratase HisB"/>
    <property type="match status" value="1"/>
</dbReference>
<dbReference type="FunFam" id="3.30.230.40:FF:000003">
    <property type="entry name" value="Imidazoleglycerol-phosphate dehydratase HisB"/>
    <property type="match status" value="1"/>
</dbReference>
<dbReference type="Gene3D" id="3.30.230.40">
    <property type="entry name" value="Imidazole glycerol phosphate dehydratase, domain 1"/>
    <property type="match status" value="2"/>
</dbReference>
<dbReference type="HAMAP" id="MF_00076">
    <property type="entry name" value="HisB"/>
    <property type="match status" value="1"/>
</dbReference>
<dbReference type="InterPro" id="IPR038494">
    <property type="entry name" value="IGPD_sf"/>
</dbReference>
<dbReference type="InterPro" id="IPR000807">
    <property type="entry name" value="ImidazoleglycerolP_deHydtase"/>
</dbReference>
<dbReference type="InterPro" id="IPR020565">
    <property type="entry name" value="ImidazoleglycerP_deHydtase_CS"/>
</dbReference>
<dbReference type="InterPro" id="IPR020568">
    <property type="entry name" value="Ribosomal_Su5_D2-typ_SF"/>
</dbReference>
<dbReference type="NCBIfam" id="NF002106">
    <property type="entry name" value="PRK00951.1-1"/>
    <property type="match status" value="1"/>
</dbReference>
<dbReference type="NCBIfam" id="NF002109">
    <property type="entry name" value="PRK00951.1-5"/>
    <property type="match status" value="1"/>
</dbReference>
<dbReference type="NCBIfam" id="NF002111">
    <property type="entry name" value="PRK00951.2-1"/>
    <property type="match status" value="1"/>
</dbReference>
<dbReference type="NCBIfam" id="NF002114">
    <property type="entry name" value="PRK00951.2-4"/>
    <property type="match status" value="1"/>
</dbReference>
<dbReference type="PANTHER" id="PTHR23133:SF2">
    <property type="entry name" value="IMIDAZOLEGLYCEROL-PHOSPHATE DEHYDRATASE"/>
    <property type="match status" value="1"/>
</dbReference>
<dbReference type="PANTHER" id="PTHR23133">
    <property type="entry name" value="IMIDAZOLEGLYCEROL-PHOSPHATE DEHYDRATASE HIS7"/>
    <property type="match status" value="1"/>
</dbReference>
<dbReference type="Pfam" id="PF00475">
    <property type="entry name" value="IGPD"/>
    <property type="match status" value="1"/>
</dbReference>
<dbReference type="SUPFAM" id="SSF54211">
    <property type="entry name" value="Ribosomal protein S5 domain 2-like"/>
    <property type="match status" value="2"/>
</dbReference>
<dbReference type="PROSITE" id="PS00954">
    <property type="entry name" value="IGP_DEHYDRATASE_1"/>
    <property type="match status" value="1"/>
</dbReference>
<dbReference type="PROSITE" id="PS00955">
    <property type="entry name" value="IGP_DEHYDRATASE_2"/>
    <property type="match status" value="1"/>
</dbReference>
<keyword id="KW-0028">Amino-acid biosynthesis</keyword>
<keyword id="KW-0963">Cytoplasm</keyword>
<keyword id="KW-0368">Histidine biosynthesis</keyword>
<keyword id="KW-0456">Lyase</keyword>
<evidence type="ECO:0000255" key="1">
    <source>
        <dbReference type="HAMAP-Rule" id="MF_00076"/>
    </source>
</evidence>
<name>HIS7_POLNS</name>
<comment type="catalytic activity">
    <reaction evidence="1">
        <text>D-erythro-1-(imidazol-4-yl)glycerol 3-phosphate = 3-(imidazol-4-yl)-2-oxopropyl phosphate + H2O</text>
        <dbReference type="Rhea" id="RHEA:11040"/>
        <dbReference type="ChEBI" id="CHEBI:15377"/>
        <dbReference type="ChEBI" id="CHEBI:57766"/>
        <dbReference type="ChEBI" id="CHEBI:58278"/>
        <dbReference type="EC" id="4.2.1.19"/>
    </reaction>
</comment>
<comment type="pathway">
    <text evidence="1">Amino-acid biosynthesis; L-histidine biosynthesis; L-histidine from 5-phospho-alpha-D-ribose 1-diphosphate: step 6/9.</text>
</comment>
<comment type="subcellular location">
    <subcellularLocation>
        <location evidence="1">Cytoplasm</location>
    </subcellularLocation>
</comment>
<comment type="similarity">
    <text evidence="1">Belongs to the imidazoleglycerol-phosphate dehydratase family.</text>
</comment>